<sequence>MENLDALVSQALEAVRHTEDVNALEQIRVHYLGKKGELTQVMKTLGDLPAEERPKVGALINVAKEKVQDVLNARKTELEGAALAARLAAERIDVTLPGRGQLSGGLHPVTRTLERIEQCFSRIGYEVAEGPEVEDDYHNFEALNIPGHHPARAMHDTFYFNANMLLRTHTSPVQVRTMESQQPPIRIVCPGRVYRCDSDLTHSPMFHQVEGLLVDEGVSFADLKGTIEEFLRAFFEKQLEVRFRPSFFPFTEPSAEVDIQCVICSGNGCRVCKQTGWLEVMGCGMVHPNVLRMSNIDPEKFQGFAFGMGAERLAMLRYGVNDLRLFFDNDLRFLGQFR</sequence>
<proteinExistence type="evidence at protein level"/>
<protein>
    <recommendedName>
        <fullName evidence="1">Phenylalanine--tRNA ligase alpha subunit</fullName>
        <ecNumber evidence="1">6.1.1.20</ecNumber>
    </recommendedName>
    <alternativeName>
        <fullName evidence="1">Phenylalanyl-tRNA synthetase alpha subunit</fullName>
        <shortName evidence="1">PheRS</shortName>
    </alternativeName>
</protein>
<reference key="1">
    <citation type="journal article" date="2000" name="Nature">
        <title>Complete genome sequence of Pseudomonas aeruginosa PAO1, an opportunistic pathogen.</title>
        <authorList>
            <person name="Stover C.K."/>
            <person name="Pham X.-Q.T."/>
            <person name="Erwin A.L."/>
            <person name="Mizoguchi S.D."/>
            <person name="Warrener P."/>
            <person name="Hickey M.J."/>
            <person name="Brinkman F.S.L."/>
            <person name="Hufnagle W.O."/>
            <person name="Kowalik D.J."/>
            <person name="Lagrou M."/>
            <person name="Garber R.L."/>
            <person name="Goltry L."/>
            <person name="Tolentino E."/>
            <person name="Westbrock-Wadman S."/>
            <person name="Yuan Y."/>
            <person name="Brody L.L."/>
            <person name="Coulter S.N."/>
            <person name="Folger K.R."/>
            <person name="Kas A."/>
            <person name="Larbig K."/>
            <person name="Lim R.M."/>
            <person name="Smith K.A."/>
            <person name="Spencer D.H."/>
            <person name="Wong G.K.-S."/>
            <person name="Wu Z."/>
            <person name="Paulsen I.T."/>
            <person name="Reizer J."/>
            <person name="Saier M.H. Jr."/>
            <person name="Hancock R.E.W."/>
            <person name="Lory S."/>
            <person name="Olson M.V."/>
        </authorList>
    </citation>
    <scope>NUCLEOTIDE SEQUENCE [LARGE SCALE GENOMIC DNA]</scope>
    <source>
        <strain>ATCC 15692 / DSM 22644 / CIP 104116 / JCM 14847 / LMG 12228 / 1C / PRS 101 / PAO1</strain>
    </source>
</reference>
<gene>
    <name evidence="1" type="primary">pheS</name>
    <name type="ordered locus">PA2740</name>
</gene>
<organism>
    <name type="scientific">Pseudomonas aeruginosa (strain ATCC 15692 / DSM 22644 / CIP 104116 / JCM 14847 / LMG 12228 / 1C / PRS 101 / PAO1)</name>
    <dbReference type="NCBI Taxonomy" id="208964"/>
    <lineage>
        <taxon>Bacteria</taxon>
        <taxon>Pseudomonadati</taxon>
        <taxon>Pseudomonadota</taxon>
        <taxon>Gammaproteobacteria</taxon>
        <taxon>Pseudomonadales</taxon>
        <taxon>Pseudomonadaceae</taxon>
        <taxon>Pseudomonas</taxon>
    </lineage>
</organism>
<evidence type="ECO:0000255" key="1">
    <source>
        <dbReference type="HAMAP-Rule" id="MF_00281"/>
    </source>
</evidence>
<evidence type="ECO:0007829" key="2">
    <source>
        <dbReference type="PDB" id="4P72"/>
    </source>
</evidence>
<evidence type="ECO:0007829" key="3">
    <source>
        <dbReference type="PDB" id="4P74"/>
    </source>
</evidence>
<comment type="catalytic activity">
    <reaction evidence="1">
        <text>tRNA(Phe) + L-phenylalanine + ATP = L-phenylalanyl-tRNA(Phe) + AMP + diphosphate + H(+)</text>
        <dbReference type="Rhea" id="RHEA:19413"/>
        <dbReference type="Rhea" id="RHEA-COMP:9668"/>
        <dbReference type="Rhea" id="RHEA-COMP:9699"/>
        <dbReference type="ChEBI" id="CHEBI:15378"/>
        <dbReference type="ChEBI" id="CHEBI:30616"/>
        <dbReference type="ChEBI" id="CHEBI:33019"/>
        <dbReference type="ChEBI" id="CHEBI:58095"/>
        <dbReference type="ChEBI" id="CHEBI:78442"/>
        <dbReference type="ChEBI" id="CHEBI:78531"/>
        <dbReference type="ChEBI" id="CHEBI:456215"/>
        <dbReference type="EC" id="6.1.1.20"/>
    </reaction>
</comment>
<comment type="cofactor">
    <cofactor evidence="1">
        <name>Mg(2+)</name>
        <dbReference type="ChEBI" id="CHEBI:18420"/>
    </cofactor>
    <text evidence="1">Binds 2 magnesium ions per tetramer.</text>
</comment>
<comment type="subunit">
    <text evidence="1">Tetramer of two alpha and two beta subunits.</text>
</comment>
<comment type="subcellular location">
    <subcellularLocation>
        <location evidence="1">Cytoplasm</location>
    </subcellularLocation>
</comment>
<comment type="similarity">
    <text evidence="1">Belongs to the class-II aminoacyl-tRNA synthetase family. Phe-tRNA synthetase alpha subunit type 1 subfamily.</text>
</comment>
<accession>Q9I0A3</accession>
<feature type="chain" id="PRO_0000126744" description="Phenylalanine--tRNA ligase alpha subunit">
    <location>
        <begin position="1"/>
        <end position="338"/>
    </location>
</feature>
<feature type="binding site" evidence="1">
    <location>
        <position position="252"/>
    </location>
    <ligand>
        <name>Mg(2+)</name>
        <dbReference type="ChEBI" id="CHEBI:18420"/>
        <note>shared with beta subunit</note>
    </ligand>
</feature>
<feature type="helix" evidence="2">
    <location>
        <begin position="108"/>
        <end position="121"/>
    </location>
</feature>
<feature type="turn" evidence="3">
    <location>
        <begin position="122"/>
        <end position="124"/>
    </location>
</feature>
<feature type="strand" evidence="2">
    <location>
        <begin position="132"/>
        <end position="135"/>
    </location>
</feature>
<feature type="helix" evidence="2">
    <location>
        <begin position="136"/>
        <end position="139"/>
    </location>
</feature>
<feature type="helix" evidence="2">
    <location>
        <begin position="141"/>
        <end position="143"/>
    </location>
</feature>
<feature type="helix" evidence="2">
    <location>
        <begin position="150"/>
        <end position="152"/>
    </location>
</feature>
<feature type="turn" evidence="2">
    <location>
        <begin position="154"/>
        <end position="156"/>
    </location>
</feature>
<feature type="strand" evidence="2">
    <location>
        <begin position="159"/>
        <end position="166"/>
    </location>
</feature>
<feature type="strand" evidence="2">
    <location>
        <begin position="168"/>
        <end position="170"/>
    </location>
</feature>
<feature type="helix" evidence="2">
    <location>
        <begin position="171"/>
        <end position="180"/>
    </location>
</feature>
<feature type="strand" evidence="2">
    <location>
        <begin position="185"/>
        <end position="194"/>
    </location>
</feature>
<feature type="strand" evidence="3">
    <location>
        <begin position="199"/>
        <end position="201"/>
    </location>
</feature>
<feature type="strand" evidence="2">
    <location>
        <begin position="204"/>
        <end position="217"/>
    </location>
</feature>
<feature type="helix" evidence="2">
    <location>
        <begin position="220"/>
        <end position="234"/>
    </location>
</feature>
<feature type="strand" evidence="2">
    <location>
        <begin position="241"/>
        <end position="248"/>
    </location>
</feature>
<feature type="strand" evidence="2">
    <location>
        <begin position="251"/>
        <end position="260"/>
    </location>
</feature>
<feature type="strand" evidence="2">
    <location>
        <begin position="277"/>
        <end position="286"/>
    </location>
</feature>
<feature type="helix" evidence="2">
    <location>
        <begin position="288"/>
        <end position="293"/>
    </location>
</feature>
<feature type="turn" evidence="2">
    <location>
        <begin position="298"/>
        <end position="300"/>
    </location>
</feature>
<feature type="strand" evidence="2">
    <location>
        <begin position="302"/>
        <end position="309"/>
    </location>
</feature>
<feature type="helix" evidence="2">
    <location>
        <begin position="310"/>
        <end position="318"/>
    </location>
</feature>
<feature type="helix" evidence="2">
    <location>
        <begin position="325"/>
        <end position="328"/>
    </location>
</feature>
<feature type="helix" evidence="2">
    <location>
        <begin position="331"/>
        <end position="334"/>
    </location>
</feature>
<feature type="helix" evidence="2">
    <location>
        <begin position="335"/>
        <end position="337"/>
    </location>
</feature>
<name>SYFA_PSEAE</name>
<keyword id="KW-0002">3D-structure</keyword>
<keyword id="KW-0030">Aminoacyl-tRNA synthetase</keyword>
<keyword id="KW-0067">ATP-binding</keyword>
<keyword id="KW-0963">Cytoplasm</keyword>
<keyword id="KW-0436">Ligase</keyword>
<keyword id="KW-0460">Magnesium</keyword>
<keyword id="KW-0479">Metal-binding</keyword>
<keyword id="KW-0547">Nucleotide-binding</keyword>
<keyword id="KW-0648">Protein biosynthesis</keyword>
<keyword id="KW-1185">Reference proteome</keyword>
<dbReference type="EC" id="6.1.1.20" evidence="1"/>
<dbReference type="EMBL" id="AE004091">
    <property type="protein sequence ID" value="AAG06128.1"/>
    <property type="molecule type" value="Genomic_DNA"/>
</dbReference>
<dbReference type="PIR" id="B83303">
    <property type="entry name" value="B83303"/>
</dbReference>
<dbReference type="RefSeq" id="NP_251430.1">
    <property type="nucleotide sequence ID" value="NC_002516.2"/>
</dbReference>
<dbReference type="RefSeq" id="WP_003114409.1">
    <property type="nucleotide sequence ID" value="NZ_QZGE01000011.1"/>
</dbReference>
<dbReference type="PDB" id="4P71">
    <property type="method" value="X-ray"/>
    <property type="resolution" value="2.79 A"/>
    <property type="chains" value="C/D=1-338"/>
</dbReference>
<dbReference type="PDB" id="4P72">
    <property type="method" value="X-ray"/>
    <property type="resolution" value="2.62 A"/>
    <property type="chains" value="C/D=1-338"/>
</dbReference>
<dbReference type="PDB" id="4P73">
    <property type="method" value="X-ray"/>
    <property type="resolution" value="3.03 A"/>
    <property type="chains" value="C/D=1-338"/>
</dbReference>
<dbReference type="PDB" id="4P74">
    <property type="method" value="X-ray"/>
    <property type="resolution" value="2.70 A"/>
    <property type="chains" value="C/D=1-338"/>
</dbReference>
<dbReference type="PDB" id="4P75">
    <property type="method" value="X-ray"/>
    <property type="resolution" value="2.96 A"/>
    <property type="chains" value="C/D=1-338"/>
</dbReference>
<dbReference type="PDBsum" id="4P71"/>
<dbReference type="PDBsum" id="4P72"/>
<dbReference type="PDBsum" id="4P73"/>
<dbReference type="PDBsum" id="4P74"/>
<dbReference type="PDBsum" id="4P75"/>
<dbReference type="SMR" id="Q9I0A3"/>
<dbReference type="FunCoup" id="Q9I0A3">
    <property type="interactions" value="697"/>
</dbReference>
<dbReference type="STRING" id="208964.PA2740"/>
<dbReference type="BindingDB" id="Q9I0A3"/>
<dbReference type="PaxDb" id="208964-PA2740"/>
<dbReference type="DNASU" id="882970"/>
<dbReference type="GeneID" id="882970"/>
<dbReference type="KEGG" id="pae:PA2740"/>
<dbReference type="PATRIC" id="fig|208964.12.peg.2865"/>
<dbReference type="PseudoCAP" id="PA2740"/>
<dbReference type="HOGENOM" id="CLU_025086_0_1_6"/>
<dbReference type="InParanoid" id="Q9I0A3"/>
<dbReference type="OrthoDB" id="9800719at2"/>
<dbReference type="PhylomeDB" id="Q9I0A3"/>
<dbReference type="BioCyc" id="PAER208964:G1FZ6-2779-MONOMER"/>
<dbReference type="EvolutionaryTrace" id="Q9I0A3"/>
<dbReference type="Proteomes" id="UP000002438">
    <property type="component" value="Chromosome"/>
</dbReference>
<dbReference type="GO" id="GO:0005737">
    <property type="term" value="C:cytoplasm"/>
    <property type="evidence" value="ECO:0000318"/>
    <property type="project" value="GO_Central"/>
</dbReference>
<dbReference type="GO" id="GO:0005524">
    <property type="term" value="F:ATP binding"/>
    <property type="evidence" value="ECO:0007669"/>
    <property type="project" value="UniProtKB-UniRule"/>
</dbReference>
<dbReference type="GO" id="GO:0000287">
    <property type="term" value="F:magnesium ion binding"/>
    <property type="evidence" value="ECO:0007669"/>
    <property type="project" value="UniProtKB-UniRule"/>
</dbReference>
<dbReference type="GO" id="GO:0004826">
    <property type="term" value="F:phenylalanine-tRNA ligase activity"/>
    <property type="evidence" value="ECO:0000318"/>
    <property type="project" value="GO_Central"/>
</dbReference>
<dbReference type="GO" id="GO:0000049">
    <property type="term" value="F:tRNA binding"/>
    <property type="evidence" value="ECO:0007669"/>
    <property type="project" value="InterPro"/>
</dbReference>
<dbReference type="GO" id="GO:0006432">
    <property type="term" value="P:phenylalanyl-tRNA aminoacylation"/>
    <property type="evidence" value="ECO:0000318"/>
    <property type="project" value="GO_Central"/>
</dbReference>
<dbReference type="CDD" id="cd00496">
    <property type="entry name" value="PheRS_alpha_core"/>
    <property type="match status" value="1"/>
</dbReference>
<dbReference type="FunFam" id="3.30.930.10:FF:000003">
    <property type="entry name" value="Phenylalanine--tRNA ligase alpha subunit"/>
    <property type="match status" value="1"/>
</dbReference>
<dbReference type="Gene3D" id="3.30.930.10">
    <property type="entry name" value="Bira Bifunctional Protein, Domain 2"/>
    <property type="match status" value="1"/>
</dbReference>
<dbReference type="HAMAP" id="MF_00281">
    <property type="entry name" value="Phe_tRNA_synth_alpha1"/>
    <property type="match status" value="1"/>
</dbReference>
<dbReference type="InterPro" id="IPR006195">
    <property type="entry name" value="aa-tRNA-synth_II"/>
</dbReference>
<dbReference type="InterPro" id="IPR045864">
    <property type="entry name" value="aa-tRNA-synth_II/BPL/LPL"/>
</dbReference>
<dbReference type="InterPro" id="IPR004529">
    <property type="entry name" value="Phe-tRNA-synth_IIc_asu"/>
</dbReference>
<dbReference type="InterPro" id="IPR004188">
    <property type="entry name" value="Phe-tRNA_ligase_II_N"/>
</dbReference>
<dbReference type="InterPro" id="IPR022911">
    <property type="entry name" value="Phe_tRNA_ligase_alpha1_bac"/>
</dbReference>
<dbReference type="InterPro" id="IPR002319">
    <property type="entry name" value="Phenylalanyl-tRNA_Synthase"/>
</dbReference>
<dbReference type="InterPro" id="IPR010978">
    <property type="entry name" value="tRNA-bd_arm"/>
</dbReference>
<dbReference type="NCBIfam" id="TIGR00468">
    <property type="entry name" value="pheS"/>
    <property type="match status" value="1"/>
</dbReference>
<dbReference type="PANTHER" id="PTHR11538:SF41">
    <property type="entry name" value="PHENYLALANINE--TRNA LIGASE, MITOCHONDRIAL"/>
    <property type="match status" value="1"/>
</dbReference>
<dbReference type="PANTHER" id="PTHR11538">
    <property type="entry name" value="PHENYLALANYL-TRNA SYNTHETASE"/>
    <property type="match status" value="1"/>
</dbReference>
<dbReference type="Pfam" id="PF02912">
    <property type="entry name" value="Phe_tRNA-synt_N"/>
    <property type="match status" value="1"/>
</dbReference>
<dbReference type="Pfam" id="PF01409">
    <property type="entry name" value="tRNA-synt_2d"/>
    <property type="match status" value="1"/>
</dbReference>
<dbReference type="SUPFAM" id="SSF55681">
    <property type="entry name" value="Class II aaRS and biotin synthetases"/>
    <property type="match status" value="1"/>
</dbReference>
<dbReference type="SUPFAM" id="SSF46589">
    <property type="entry name" value="tRNA-binding arm"/>
    <property type="match status" value="1"/>
</dbReference>
<dbReference type="PROSITE" id="PS50862">
    <property type="entry name" value="AA_TRNA_LIGASE_II"/>
    <property type="match status" value="1"/>
</dbReference>